<evidence type="ECO:0000255" key="1"/>
<evidence type="ECO:0000255" key="2">
    <source>
        <dbReference type="PROSITE-ProRule" id="PRU00145"/>
    </source>
</evidence>
<evidence type="ECO:0000256" key="3">
    <source>
        <dbReference type="SAM" id="MobiDB-lite"/>
    </source>
</evidence>
<evidence type="ECO:0000269" key="4">
    <source>
    </source>
</evidence>
<evidence type="ECO:0000269" key="5">
    <source>
    </source>
</evidence>
<evidence type="ECO:0000269" key="6">
    <source>
    </source>
</evidence>
<evidence type="ECO:0000269" key="7">
    <source>
    </source>
</evidence>
<evidence type="ECO:0000269" key="8">
    <source>
    </source>
</evidence>
<evidence type="ECO:0000269" key="9">
    <source>
    </source>
</evidence>
<evidence type="ECO:0000269" key="10">
    <source>
    </source>
</evidence>
<evidence type="ECO:0000305" key="11"/>
<evidence type="ECO:0007744" key="12">
    <source>
    </source>
</evidence>
<evidence type="ECO:0007829" key="13">
    <source>
        <dbReference type="PDB" id="3NSU"/>
    </source>
</evidence>
<evidence type="ECO:0007829" key="14">
    <source>
        <dbReference type="PDB" id="4A6H"/>
    </source>
</evidence>
<sequence length="686" mass="77995">MSKNNTMTSAVSDMLSQQQLNLQHLHNLQQHTRSMTSADHANVLQQQQQQQQQQQQQQQQQQQSASFQNGSLTSDINQQSYLNGQPVPSTSNSTFQNNRTLTMNSGGLQGIISNGSPNIDSNTNVTIAVPDPNNNNGKQLQGKNSLTNTSILSRARSSLQRQRLAQQQQQQQDPRSPLVILVPTAAQPTDILAARFSAWRNVIKSVIVYLTEIASIQDEIVRQQLRLSHAVQFPFFSIENQYQPSSQEDKSVQKFFLPLGNGSIQDLPTILNQYHESLASSASKASRELTNDVIPRLEDLRRDLIVKIKEIKSLQSDFKNSCSKELQQTKQAMKQFQESLKDARYSVPKQDPFLTKLALDRQIKKQLQEENFLHEAFDNLETSGAELEKIVVMEIQNSLTIYARLLGQEAQLVFDILISKLDSGFFNVDPQFEWDNFISRDPNFLLPNLPMRTFKEIVYKYQFDPLTYEIKSGFLERRSKFLKSYSKGYYVLTPNFLHEFKTADRKKDLVPVMSLALSECTVTEHSRKNSTSSPNSTGSDAKFVLHAKQNGIIRRGHNWVFKADSYESMMSWFDNLKILTSTSNIQDKYKFITQKLNLNSDGKPKLTNNHTSINKYQLSNANSTMVENDENDDINSNYVGSTVTPKLDNQTNTNTSMSSLPDTNDSELQDQVPNIYIQTPINDFKS</sequence>
<keyword id="KW-0002">3D-structure</keyword>
<keyword id="KW-1003">Cell membrane</keyword>
<keyword id="KW-0175">Coiled coil</keyword>
<keyword id="KW-0443">Lipid metabolism</keyword>
<keyword id="KW-0472">Membrane</keyword>
<keyword id="KW-0597">Phosphoprotein</keyword>
<keyword id="KW-1185">Reference proteome</keyword>
<keyword id="KW-0746">Sphingolipid metabolism</keyword>
<reference key="1">
    <citation type="journal article" date="1997" name="Nature">
        <title>The nucleotide sequence of Saccharomyces cerevisiae chromosome IX.</title>
        <authorList>
            <person name="Churcher C.M."/>
            <person name="Bowman S."/>
            <person name="Badcock K."/>
            <person name="Bankier A.T."/>
            <person name="Brown D."/>
            <person name="Chillingworth T."/>
            <person name="Connor R."/>
            <person name="Devlin K."/>
            <person name="Gentles S."/>
            <person name="Hamlin N."/>
            <person name="Harris D.E."/>
            <person name="Horsnell T."/>
            <person name="Hunt S."/>
            <person name="Jagels K."/>
            <person name="Jones M."/>
            <person name="Lye G."/>
            <person name="Moule S."/>
            <person name="Odell C."/>
            <person name="Pearson D."/>
            <person name="Rajandream M.A."/>
            <person name="Rice P."/>
            <person name="Rowley N."/>
            <person name="Skelton J."/>
            <person name="Smith V."/>
            <person name="Walsh S.V."/>
            <person name="Whitehead S."/>
            <person name="Barrell B.G."/>
        </authorList>
    </citation>
    <scope>NUCLEOTIDE SEQUENCE [LARGE SCALE GENOMIC DNA]</scope>
    <source>
        <strain>ATCC 204508 / S288c</strain>
    </source>
</reference>
<reference key="2">
    <citation type="journal article" date="2014" name="G3 (Bethesda)">
        <title>The reference genome sequence of Saccharomyces cerevisiae: Then and now.</title>
        <authorList>
            <person name="Engel S.R."/>
            <person name="Dietrich F.S."/>
            <person name="Fisk D.G."/>
            <person name="Binkley G."/>
            <person name="Balakrishnan R."/>
            <person name="Costanzo M.C."/>
            <person name="Dwight S.S."/>
            <person name="Hitz B.C."/>
            <person name="Karra K."/>
            <person name="Nash R.S."/>
            <person name="Weng S."/>
            <person name="Wong E.D."/>
            <person name="Lloyd P."/>
            <person name="Skrzypek M.S."/>
            <person name="Miyasato S.R."/>
            <person name="Simison M."/>
            <person name="Cherry J.M."/>
        </authorList>
    </citation>
    <scope>GENOME REANNOTATION</scope>
    <source>
        <strain>ATCC 204508 / S288c</strain>
    </source>
</reference>
<reference key="3">
    <citation type="journal article" date="2003" name="Nature">
        <title>Global analysis of protein expression in yeast.</title>
        <authorList>
            <person name="Ghaemmaghami S."/>
            <person name="Huh W.-K."/>
            <person name="Bower K."/>
            <person name="Howson R.W."/>
            <person name="Belle A."/>
            <person name="Dephoure N."/>
            <person name="O'Shea E.K."/>
            <person name="Weissman J.S."/>
        </authorList>
    </citation>
    <scope>LEVEL OF PROTEIN EXPRESSION [LARGE SCALE ANALYSIS]</scope>
</reference>
<reference key="4">
    <citation type="journal article" date="2004" name="EMBO J.">
        <title>Genome-wide lethality screen identifies new PI4,5P2 effectors that regulate the actin cytoskeleton.</title>
        <authorList>
            <person name="Audhya A."/>
            <person name="Loewith R."/>
            <person name="Parsons A.B."/>
            <person name="Gao L."/>
            <person name="Tabuchi M."/>
            <person name="Zhou H."/>
            <person name="Boone C."/>
            <person name="Hall M.N."/>
            <person name="Emr S.D."/>
        </authorList>
    </citation>
    <scope>FUNCTION</scope>
    <scope>SUBCELLULAR LOCATION</scope>
    <scope>PHOSPHORYLATION BY TORC2</scope>
    <scope>MUTAGENESIS OF LYS-483 AND LYS-487</scope>
    <scope>INTERACTION WITH SLM2 AND AVO2</scope>
</reference>
<reference key="5">
    <citation type="journal article" date="2004" name="Mol. Cell">
        <title>Genome-wide analysis of membrane targeting by S.cerevisiae pleckstrin homology domains.</title>
        <authorList>
            <person name="Yu J.W."/>
            <person name="Mendrola J.M."/>
            <person name="Audhya A."/>
            <person name="Singh S."/>
            <person name="Keleti D."/>
            <person name="DeWald D.B."/>
            <person name="Murray D."/>
            <person name="Emr S.D."/>
            <person name="Lemmon M.A."/>
        </authorList>
    </citation>
    <scope>PHOSPHOINOSITIDE-BINDING</scope>
    <scope>SUBCELLULAR LOCATION</scope>
</reference>
<reference key="6">
    <citation type="journal article" date="2005" name="Mol. Biol. Cell">
        <title>The pleckstrin homology domain proteins Slm1 and Slm2 are required for actin cytoskeleton organization in yeast and bind phosphatidylinositol-4,5-bisphosphate and TORC2.</title>
        <authorList>
            <person name="Fadri M."/>
            <person name="Daquinag A."/>
            <person name="Wang S."/>
            <person name="Xue T."/>
            <person name="Kunz J."/>
        </authorList>
    </citation>
    <scope>FUNCTION</scope>
    <scope>PHOSPHOINOSITIDE-BINDING</scope>
    <scope>INTERACTION WITH AVO2; BIT2; BIT61 AND TOR2</scope>
    <scope>SUBCELLULAR LOCATION</scope>
    <scope>MUTAGENESIS OF 477-ARG-ARG-478; LYS-483 AND LYS-487</scope>
</reference>
<reference key="7">
    <citation type="journal article" date="2006" name="J. Biol. Chem.">
        <title>Mutual antagonism of TOR and calcineurin signaling.</title>
        <authorList>
            <person name="Mulet J.M."/>
            <person name="Martin D.E."/>
            <person name="Loewith R."/>
            <person name="Hall M.N."/>
        </authorList>
    </citation>
    <scope>FUNCTION</scope>
    <scope>INTERACTION WITH CNA1 AND TOR2</scope>
</reference>
<reference key="8">
    <citation type="journal article" date="2006" name="Mol. Cell. Biol.">
        <title>Slm1 and slm2 are novel substrates of the calcineurin phosphatase required for heat stress-induced endocytosis of the yeast uracil permease.</title>
        <authorList>
            <person name="Bultynck G."/>
            <person name="Heath V.L."/>
            <person name="Majeed A.P."/>
            <person name="Galan J.-M."/>
            <person name="Haguenauer-Tsapis R."/>
            <person name="Cyert M.S."/>
        </authorList>
    </citation>
    <scope>FUNCTION</scope>
    <scope>DEPHOSPHORYLATION BY CALCINEURIN</scope>
    <scope>INTERACTION WITH CNA1 AND CNA2</scope>
</reference>
<reference key="9">
    <citation type="journal article" date="2008" name="Mol. Cell. Proteomics">
        <title>A multidimensional chromatography technology for in-depth phosphoproteome analysis.</title>
        <authorList>
            <person name="Albuquerque C.P."/>
            <person name="Smolka M.B."/>
            <person name="Payne S.H."/>
            <person name="Bafna V."/>
            <person name="Eng J."/>
            <person name="Zhou H."/>
        </authorList>
    </citation>
    <scope>IDENTIFICATION BY MASS SPECTROMETRY [LARGE SCALE ANALYSIS]</scope>
</reference>
<reference key="10">
    <citation type="journal article" date="2009" name="Science">
        <title>Global analysis of Cdk1 substrate phosphorylation sites provides insights into evolution.</title>
        <authorList>
            <person name="Holt L.J."/>
            <person name="Tuch B.B."/>
            <person name="Villen J."/>
            <person name="Johnson A.D."/>
            <person name="Gygi S.P."/>
            <person name="Morgan D.O."/>
        </authorList>
    </citation>
    <scope>PHOSPHORYLATION [LARGE SCALE ANALYSIS] AT SER-145; SER-150 AND SER-153</scope>
    <scope>IDENTIFICATION BY MASS SPECTROMETRY [LARGE SCALE ANALYSIS]</scope>
</reference>
<reference evidence="11" key="11">
    <citation type="journal article" date="2022" name="FEBS J.">
        <title>Regulation of sphingolipid biosynthesis in the endoplasmic reticulum via signals from the plasma membrane in budding yeast.</title>
        <authorList>
            <person name="Ishino Y."/>
            <person name="Komatsu N."/>
            <person name="Sakata K.T."/>
            <person name="Yoshikawa D."/>
            <person name="Tani M."/>
            <person name="Maeda T."/>
            <person name="Morishige K."/>
            <person name="Yoshizawa K."/>
            <person name="Tanaka N."/>
            <person name="Tabuchi M."/>
        </authorList>
    </citation>
    <scope>FUNCTION</scope>
    <scope>PHOSPHORYLATION</scope>
</reference>
<organism>
    <name type="scientific">Saccharomyces cerevisiae (strain ATCC 204508 / S288c)</name>
    <name type="common">Baker's yeast</name>
    <dbReference type="NCBI Taxonomy" id="559292"/>
    <lineage>
        <taxon>Eukaryota</taxon>
        <taxon>Fungi</taxon>
        <taxon>Dikarya</taxon>
        <taxon>Ascomycota</taxon>
        <taxon>Saccharomycotina</taxon>
        <taxon>Saccharomycetes</taxon>
        <taxon>Saccharomycetales</taxon>
        <taxon>Saccharomycetaceae</taxon>
        <taxon>Saccharomyces</taxon>
    </lineage>
</organism>
<proteinExistence type="evidence at protein level"/>
<protein>
    <recommendedName>
        <fullName>Phosphatidylinositol 4,5-bisphosphate-binding protein SLM1</fullName>
    </recommendedName>
    <alternativeName>
        <fullName>Synthetic lethal with MSS4 protein 1</fullName>
    </alternativeName>
    <alternativeName>
        <fullName>TORC2 effector protein SLM1</fullName>
    </alternativeName>
</protein>
<dbReference type="EMBL" id="Z38125">
    <property type="protein sequence ID" value="CAA86275.1"/>
    <property type="molecule type" value="Genomic_DNA"/>
</dbReference>
<dbReference type="EMBL" id="BK006942">
    <property type="protein sequence ID" value="DAA08448.1"/>
    <property type="molecule type" value="Genomic_DNA"/>
</dbReference>
<dbReference type="PIR" id="S48467">
    <property type="entry name" value="S48467"/>
</dbReference>
<dbReference type="RefSeq" id="NP_012161.1">
    <property type="nucleotide sequence ID" value="NM_001179453.1"/>
</dbReference>
<dbReference type="PDB" id="3NSU">
    <property type="method" value="X-ray"/>
    <property type="resolution" value="2.00 A"/>
    <property type="chains" value="A/B=469-583"/>
</dbReference>
<dbReference type="PDB" id="4A5K">
    <property type="method" value="X-ray"/>
    <property type="resolution" value="1.76 A"/>
    <property type="chains" value="A/B/C/D=469-583"/>
</dbReference>
<dbReference type="PDB" id="4A6F">
    <property type="method" value="X-ray"/>
    <property type="resolution" value="1.68 A"/>
    <property type="chains" value="A/B=469-583"/>
</dbReference>
<dbReference type="PDB" id="4A6H">
    <property type="method" value="X-ray"/>
    <property type="resolution" value="1.45 A"/>
    <property type="chains" value="A/B/C/D=469-583"/>
</dbReference>
<dbReference type="PDB" id="4A6K">
    <property type="method" value="X-ray"/>
    <property type="resolution" value="1.80 A"/>
    <property type="chains" value="A/B/C/D=469-583"/>
</dbReference>
<dbReference type="PDBsum" id="3NSU"/>
<dbReference type="PDBsum" id="4A5K"/>
<dbReference type="PDBsum" id="4A6F"/>
<dbReference type="PDBsum" id="4A6H"/>
<dbReference type="PDBsum" id="4A6K"/>
<dbReference type="SMR" id="P40485"/>
<dbReference type="BioGRID" id="34886">
    <property type="interactions" value="184"/>
</dbReference>
<dbReference type="DIP" id="DIP-1353N"/>
<dbReference type="ELM" id="P40485"/>
<dbReference type="FunCoup" id="P40485">
    <property type="interactions" value="189"/>
</dbReference>
<dbReference type="IntAct" id="P40485">
    <property type="interactions" value="28"/>
</dbReference>
<dbReference type="MINT" id="P40485"/>
<dbReference type="STRING" id="4932.YIL105C"/>
<dbReference type="iPTMnet" id="P40485"/>
<dbReference type="PaxDb" id="4932-YIL105C"/>
<dbReference type="PeptideAtlas" id="P40485"/>
<dbReference type="EnsemblFungi" id="YIL105C_mRNA">
    <property type="protein sequence ID" value="YIL105C"/>
    <property type="gene ID" value="YIL105C"/>
</dbReference>
<dbReference type="GeneID" id="854701"/>
<dbReference type="KEGG" id="sce:YIL105C"/>
<dbReference type="AGR" id="SGD:S000001367"/>
<dbReference type="SGD" id="S000001367">
    <property type="gene designation" value="SLM1"/>
</dbReference>
<dbReference type="VEuPathDB" id="FungiDB:YIL105C"/>
<dbReference type="eggNOG" id="ENOG502QRAF">
    <property type="taxonomic scope" value="Eukaryota"/>
</dbReference>
<dbReference type="GeneTree" id="ENSGT00940000176324"/>
<dbReference type="HOGENOM" id="CLU_013663_1_0_1"/>
<dbReference type="InParanoid" id="P40485"/>
<dbReference type="OMA" id="IRRGHNW"/>
<dbReference type="OrthoDB" id="5598057at2759"/>
<dbReference type="BioCyc" id="YEAST:G3O-31361-MONOMER"/>
<dbReference type="BioGRID-ORCS" id="854701">
    <property type="hits" value="0 hits in 10 CRISPR screens"/>
</dbReference>
<dbReference type="EvolutionaryTrace" id="P40485"/>
<dbReference type="PRO" id="PR:P40485"/>
<dbReference type="Proteomes" id="UP000002311">
    <property type="component" value="Chromosome IX"/>
</dbReference>
<dbReference type="RNAct" id="P40485">
    <property type="molecule type" value="protein"/>
</dbReference>
<dbReference type="GO" id="GO:0005737">
    <property type="term" value="C:cytoplasm"/>
    <property type="evidence" value="ECO:0007005"/>
    <property type="project" value="SGD"/>
</dbReference>
<dbReference type="GO" id="GO:0005739">
    <property type="term" value="C:mitochondrion"/>
    <property type="evidence" value="ECO:0007005"/>
    <property type="project" value="SGD"/>
</dbReference>
<dbReference type="GO" id="GO:0005886">
    <property type="term" value="C:plasma membrane"/>
    <property type="evidence" value="ECO:0000314"/>
    <property type="project" value="SGD"/>
</dbReference>
<dbReference type="GO" id="GO:0042802">
    <property type="term" value="F:identical protein binding"/>
    <property type="evidence" value="ECO:0000353"/>
    <property type="project" value="IntAct"/>
</dbReference>
<dbReference type="GO" id="GO:0005546">
    <property type="term" value="F:phosphatidylinositol-4,5-bisphosphate binding"/>
    <property type="evidence" value="ECO:0000314"/>
    <property type="project" value="SGD"/>
</dbReference>
<dbReference type="GO" id="GO:0046625">
    <property type="term" value="F:sphingolipid binding"/>
    <property type="evidence" value="ECO:0000314"/>
    <property type="project" value="SGD"/>
</dbReference>
<dbReference type="GO" id="GO:0030036">
    <property type="term" value="P:actin cytoskeleton organization"/>
    <property type="evidence" value="ECO:0000316"/>
    <property type="project" value="SGD"/>
</dbReference>
<dbReference type="GO" id="GO:0051017">
    <property type="term" value="P:actin filament bundle assembly"/>
    <property type="evidence" value="ECO:0000316"/>
    <property type="project" value="SGD"/>
</dbReference>
<dbReference type="GO" id="GO:0070941">
    <property type="term" value="P:eisosome assembly"/>
    <property type="evidence" value="ECO:0000316"/>
    <property type="project" value="SGD"/>
</dbReference>
<dbReference type="GO" id="GO:0016197">
    <property type="term" value="P:endosomal transport"/>
    <property type="evidence" value="ECO:0000316"/>
    <property type="project" value="SGD"/>
</dbReference>
<dbReference type="GO" id="GO:0030950">
    <property type="term" value="P:establishment or maintenance of actin cytoskeleton polarity"/>
    <property type="evidence" value="ECO:0000353"/>
    <property type="project" value="SGD"/>
</dbReference>
<dbReference type="GO" id="GO:0072659">
    <property type="term" value="P:protein localization to plasma membrane"/>
    <property type="evidence" value="ECO:0000316"/>
    <property type="project" value="SGD"/>
</dbReference>
<dbReference type="GO" id="GO:0001558">
    <property type="term" value="P:regulation of cell growth"/>
    <property type="evidence" value="ECO:0000316"/>
    <property type="project" value="SGD"/>
</dbReference>
<dbReference type="GO" id="GO:0031929">
    <property type="term" value="P:TOR signaling"/>
    <property type="evidence" value="ECO:0000353"/>
    <property type="project" value="SGD"/>
</dbReference>
<dbReference type="CDD" id="cd13311">
    <property type="entry name" value="PH_Slm1"/>
    <property type="match status" value="1"/>
</dbReference>
<dbReference type="FunFam" id="2.30.29.30:FF:000328">
    <property type="entry name" value="Phosphatidylinositol 4,5-bisphosphate-binding protein SLM1"/>
    <property type="match status" value="1"/>
</dbReference>
<dbReference type="FunFam" id="1.20.1270.60:FF:000078">
    <property type="entry name" value="Slm1p"/>
    <property type="match status" value="1"/>
</dbReference>
<dbReference type="Gene3D" id="1.20.1270.60">
    <property type="entry name" value="Arfaptin homology (AH) domain/BAR domain"/>
    <property type="match status" value="1"/>
</dbReference>
<dbReference type="Gene3D" id="2.30.29.30">
    <property type="entry name" value="Pleckstrin-homology domain (PH domain)/Phosphotyrosine-binding domain (PTB)"/>
    <property type="match status" value="1"/>
</dbReference>
<dbReference type="InterPro" id="IPR027267">
    <property type="entry name" value="AH/BAR_dom_sf"/>
</dbReference>
<dbReference type="InterPro" id="IPR046868">
    <property type="entry name" value="BAR_4"/>
</dbReference>
<dbReference type="InterPro" id="IPR011993">
    <property type="entry name" value="PH-like_dom_sf"/>
</dbReference>
<dbReference type="InterPro" id="IPR001849">
    <property type="entry name" value="PH_domain"/>
</dbReference>
<dbReference type="InterPro" id="IPR046869">
    <property type="entry name" value="SLM1/RGC1-like_PH"/>
</dbReference>
<dbReference type="InterPro" id="IPR043453">
    <property type="entry name" value="Slm1_PH"/>
</dbReference>
<dbReference type="PANTHER" id="PTHR31941">
    <property type="entry name" value="CYTOSKELETAL SIGNALING PROTEIN SLM1"/>
    <property type="match status" value="1"/>
</dbReference>
<dbReference type="PANTHER" id="PTHR31941:SF16">
    <property type="entry name" value="PHOSPHATIDYLINOSITOL 4,5-BISPHOSPHATE-BINDING PROTEIN SLM1-RELATED"/>
    <property type="match status" value="1"/>
</dbReference>
<dbReference type="Pfam" id="PF20400">
    <property type="entry name" value="BAR_4"/>
    <property type="match status" value="1"/>
</dbReference>
<dbReference type="Pfam" id="PF20399">
    <property type="entry name" value="PH_20"/>
    <property type="match status" value="1"/>
</dbReference>
<dbReference type="SMART" id="SM00233">
    <property type="entry name" value="PH"/>
    <property type="match status" value="1"/>
</dbReference>
<dbReference type="SUPFAM" id="SSF103657">
    <property type="entry name" value="BAR/IMD domain-like"/>
    <property type="match status" value="1"/>
</dbReference>
<dbReference type="SUPFAM" id="SSF50729">
    <property type="entry name" value="PH domain-like"/>
    <property type="match status" value="1"/>
</dbReference>
<dbReference type="PROSITE" id="PS50003">
    <property type="entry name" value="PH_DOMAIN"/>
    <property type="match status" value="1"/>
</dbReference>
<name>SLM1_YEAST</name>
<accession>P40485</accession>
<accession>D6VVI2</accession>
<gene>
    <name type="primary">SLM1</name>
    <name type="synonym">LIT2</name>
    <name type="ordered locus">YIL105C</name>
</gene>
<feature type="chain" id="PRO_0000202965" description="Phosphatidylinositol 4,5-bisphosphate-binding protein SLM1">
    <location>
        <begin position="1"/>
        <end position="686"/>
    </location>
</feature>
<feature type="domain" description="PH" evidence="2">
    <location>
        <begin position="468"/>
        <end position="581"/>
    </location>
</feature>
<feature type="region of interest" description="Disordered" evidence="3">
    <location>
        <begin position="33"/>
        <end position="147"/>
    </location>
</feature>
<feature type="region of interest" description="Disordered" evidence="3">
    <location>
        <begin position="157"/>
        <end position="176"/>
    </location>
</feature>
<feature type="region of interest" description="Disordered" evidence="3">
    <location>
        <begin position="626"/>
        <end position="669"/>
    </location>
</feature>
<feature type="coiled-coil region" evidence="1">
    <location>
        <begin position="296"/>
        <end position="381"/>
    </location>
</feature>
<feature type="short sequence motif" description="PXIXIT-like, required for interaction with CNA1 and CNA2, and calcineurin-dependent dephosphorylation">
    <location>
        <begin position="673"/>
        <end position="678"/>
    </location>
</feature>
<feature type="compositionally biased region" description="Low complexity" evidence="3">
    <location>
        <begin position="45"/>
        <end position="63"/>
    </location>
</feature>
<feature type="compositionally biased region" description="Polar residues" evidence="3">
    <location>
        <begin position="64"/>
        <end position="126"/>
    </location>
</feature>
<feature type="compositionally biased region" description="Low complexity" evidence="3">
    <location>
        <begin position="133"/>
        <end position="144"/>
    </location>
</feature>
<feature type="compositionally biased region" description="Low complexity" evidence="3">
    <location>
        <begin position="157"/>
        <end position="172"/>
    </location>
</feature>
<feature type="compositionally biased region" description="Polar residues" evidence="3">
    <location>
        <begin position="634"/>
        <end position="663"/>
    </location>
</feature>
<feature type="modified residue" description="Phosphoserine" evidence="12">
    <location>
        <position position="145"/>
    </location>
</feature>
<feature type="modified residue" description="Phosphoserine" evidence="12">
    <location>
        <position position="150"/>
    </location>
</feature>
<feature type="modified residue" description="Phosphoserine" evidence="12">
    <location>
        <position position="153"/>
    </location>
</feature>
<feature type="mutagenesis site" description="In SLM1-PHM2; reduces phosphoinositide binding by 95%; when associated with A-487." evidence="7">
    <original>RR</original>
    <variation>AA</variation>
    <location>
        <begin position="477"/>
        <end position="478"/>
    </location>
</feature>
<feature type="mutagenesis site" description="In SLM1-PHM1; reduces phosphoinositide binding by 80% and causes mislocalization to the cytoplasm; when associated with A-487." evidence="6 7">
    <original>K</original>
    <variation>A</variation>
    <location>
        <position position="483"/>
    </location>
</feature>
<feature type="mutagenesis site" description="In SLM1-PHM1; reduces phosphoinositide binding by 80% and causes mislocalization to the cytoplasm; when associated with A-483. In SLM1-PHM2; reduces phosphoinositide binding by 95%; when associated with 477-AA-478." evidence="6 7">
    <original>K</original>
    <variation>A</variation>
    <location>
        <position position="487"/>
    </location>
</feature>
<feature type="strand" evidence="14">
    <location>
        <begin position="470"/>
        <end position="479"/>
    </location>
</feature>
<feature type="turn" evidence="14">
    <location>
        <begin position="480"/>
        <end position="483"/>
    </location>
</feature>
<feature type="strand" evidence="14">
    <location>
        <begin position="484"/>
        <end position="492"/>
    </location>
</feature>
<feature type="strand" evidence="14">
    <location>
        <begin position="494"/>
        <end position="502"/>
    </location>
</feature>
<feature type="turn" evidence="14">
    <location>
        <begin position="505"/>
        <end position="507"/>
    </location>
</feature>
<feature type="strand" evidence="14">
    <location>
        <begin position="512"/>
        <end position="516"/>
    </location>
</feature>
<feature type="helix" evidence="14">
    <location>
        <begin position="517"/>
        <end position="519"/>
    </location>
</feature>
<feature type="strand" evidence="14">
    <location>
        <begin position="520"/>
        <end position="525"/>
    </location>
</feature>
<feature type="strand" evidence="13">
    <location>
        <begin position="530"/>
        <end position="533"/>
    </location>
</feature>
<feature type="strand" evidence="14">
    <location>
        <begin position="542"/>
        <end position="553"/>
    </location>
</feature>
<feature type="strand" evidence="14">
    <location>
        <begin position="558"/>
        <end position="562"/>
    </location>
</feature>
<feature type="helix" evidence="14">
    <location>
        <begin position="566"/>
        <end position="579"/>
    </location>
</feature>
<comment type="function">
    <text evidence="6 7 8 9 10">Together with SLM2, acts as an effector of the TORC2- and calcineurin-signaling pathways. Phosphorylated and activated by TORC2 under favorable growth conditions. Mediates actin polarization via inhibition of calcineurin-dependent transcription. Upon nutrient limitation or environmental stress, gets dephosphorylated by calcineurin. Dephosphorylation inhibits its interaction with TORC2, thereby antagonizing TORC2 signaling and mediating calcineurin-dependent actin depolarization. May play a role in the response to the disruption of sphingolipid synthesis, where dephosphorylation of SLM1 leads to the activation and phosphorylation of YPK1 through the TORC2 and PKH1 pathways, which in turn phosphorylates ORM1 and LAG1 to activate sphingolipid synthesis (PubMed:34492164). Also functions in heat-induced, calcineurin-mediated uracil permease (FUR4) endocytosis (PubMed:16738335).</text>
</comment>
<comment type="subunit">
    <text evidence="6 7 8 9">Heterodimer of SLM1-SLM2. Binds phosphatidylinositol 4,5-bisphosphate, which is required for function (PubMed:15689497). Interacts with the TORC2 subunits AVO2, BIT61 and TOR2 (PubMed:15372071, PubMed:15689497). Interacts with the calcineurin catalytic subunits CNA1 and CNA2 (PubMed:16738335, PubMed:16959779).</text>
</comment>
<comment type="interaction">
    <interactant intactId="EBI-25172">
        <id>P40485</id>
    </interactant>
    <interactant intactId="EBI-25172">
        <id>P40485</id>
        <label>SLM1</label>
    </interactant>
    <organismsDiffer>false</organismsDiffer>
    <experiments>4</experiments>
</comment>
<comment type="interaction">
    <interactant intactId="EBI-25172">
        <id>P40485</id>
    </interactant>
    <interactant intactId="EBI-28706">
        <id>P53955</id>
        <label>SLM2</label>
    </interactant>
    <organismsDiffer>false</organismsDiffer>
    <experiments>4</experiments>
</comment>
<comment type="subcellular location">
    <subcellularLocation>
        <location evidence="5 6 7">Cell membrane</location>
        <topology evidence="5 6 7">Peripheral membrane protein</topology>
        <orientation evidence="5 6 7">Cytoplasmic side</orientation>
    </subcellularLocation>
    <text>Localizes to cortical punctate structures. Correct localization requires phosphatidylinositol 4,5-bisphosphate and functional TORC2.</text>
</comment>
<comment type="PTM">
    <text evidence="6 10">Phosphorylated by the target of rapamycin complex 2 (TORC2) and dephosphorylated by serine/threonine-protein phosphatase 2B (calcineurin) (PubMed:15372071). Dephosphorylated in response to the disruption or inhibition of sphingolipid synthesis (PubMed:34492164).</text>
</comment>
<comment type="miscellaneous">
    <text evidence="4">Present with 5190 molecules/cell in log phase SD medium.</text>
</comment>